<sequence length="230" mass="26269">MTKHQFKLSDPRLLSRIGYQFKQPELLQLALTHRSVSHKYNYERLEFLGDSLLGMIIANYLYHAYPHENEGRLTRMRATLVRQEALGKIATDLQLSRCLILSTGELKSGGHHRESILADTVEAIIGAIYLDSSDLNLLKDIVLKWYTPYLDHIEPTDQLKDPKSRLQEYLQARKKPLPVYEVVDIQGDAPHQHFKVECLVDGLSKIHGEGASRRFAEQAAAAEILKLLEQ</sequence>
<evidence type="ECO:0000255" key="1">
    <source>
        <dbReference type="HAMAP-Rule" id="MF_00104"/>
    </source>
</evidence>
<gene>
    <name evidence="1" type="primary">rnc</name>
    <name type="ordered locus">ABSDF0952</name>
</gene>
<proteinExistence type="inferred from homology"/>
<comment type="function">
    <text evidence="1">Digests double-stranded RNA. Involved in the processing of primary rRNA transcript to yield the immediate precursors to the large and small rRNAs (23S and 16S). Processes some mRNAs, and tRNAs when they are encoded in the rRNA operon. Processes pre-crRNA and tracrRNA of type II CRISPR loci if present in the organism.</text>
</comment>
<comment type="catalytic activity">
    <reaction evidence="1">
        <text>Endonucleolytic cleavage to 5'-phosphomonoester.</text>
        <dbReference type="EC" id="3.1.26.3"/>
    </reaction>
</comment>
<comment type="cofactor">
    <cofactor evidence="1">
        <name>Mg(2+)</name>
        <dbReference type="ChEBI" id="CHEBI:18420"/>
    </cofactor>
</comment>
<comment type="subunit">
    <text evidence="1">Homodimer.</text>
</comment>
<comment type="subcellular location">
    <subcellularLocation>
        <location evidence="1">Cytoplasm</location>
    </subcellularLocation>
</comment>
<comment type="similarity">
    <text evidence="1">Belongs to the ribonuclease III family.</text>
</comment>
<name>RNC_ACIBS</name>
<protein>
    <recommendedName>
        <fullName evidence="1">Ribonuclease 3</fullName>
        <ecNumber evidence="1">3.1.26.3</ecNumber>
    </recommendedName>
    <alternativeName>
        <fullName evidence="1">Ribonuclease III</fullName>
        <shortName evidence="1">RNase III</shortName>
    </alternativeName>
</protein>
<reference key="1">
    <citation type="journal article" date="2008" name="PLoS ONE">
        <title>Comparative analysis of Acinetobacters: three genomes for three lifestyles.</title>
        <authorList>
            <person name="Vallenet D."/>
            <person name="Nordmann P."/>
            <person name="Barbe V."/>
            <person name="Poirel L."/>
            <person name="Mangenot S."/>
            <person name="Bataille E."/>
            <person name="Dossat C."/>
            <person name="Gas S."/>
            <person name="Kreimeyer A."/>
            <person name="Lenoble P."/>
            <person name="Oztas S."/>
            <person name="Poulain J."/>
            <person name="Segurens B."/>
            <person name="Robert C."/>
            <person name="Abergel C."/>
            <person name="Claverie J.-M."/>
            <person name="Raoult D."/>
            <person name="Medigue C."/>
            <person name="Weissenbach J."/>
            <person name="Cruveiller S."/>
        </authorList>
    </citation>
    <scope>NUCLEOTIDE SEQUENCE [LARGE SCALE GENOMIC DNA]</scope>
    <source>
        <strain>SDF</strain>
    </source>
</reference>
<feature type="chain" id="PRO_1000094091" description="Ribonuclease 3">
    <location>
        <begin position="1"/>
        <end position="230"/>
    </location>
</feature>
<feature type="domain" description="RNase III" evidence="1">
    <location>
        <begin position="10"/>
        <end position="133"/>
    </location>
</feature>
<feature type="domain" description="DRBM" evidence="1">
    <location>
        <begin position="161"/>
        <end position="230"/>
    </location>
</feature>
<feature type="active site" evidence="1">
    <location>
        <position position="50"/>
    </location>
</feature>
<feature type="active site" evidence="1">
    <location>
        <position position="122"/>
    </location>
</feature>
<feature type="binding site" evidence="1">
    <location>
        <position position="46"/>
    </location>
    <ligand>
        <name>Mg(2+)</name>
        <dbReference type="ChEBI" id="CHEBI:18420"/>
    </ligand>
</feature>
<feature type="binding site" evidence="1">
    <location>
        <position position="119"/>
    </location>
    <ligand>
        <name>Mg(2+)</name>
        <dbReference type="ChEBI" id="CHEBI:18420"/>
    </ligand>
</feature>
<feature type="binding site" evidence="1">
    <location>
        <position position="122"/>
    </location>
    <ligand>
        <name>Mg(2+)</name>
        <dbReference type="ChEBI" id="CHEBI:18420"/>
    </ligand>
</feature>
<keyword id="KW-0963">Cytoplasm</keyword>
<keyword id="KW-0255">Endonuclease</keyword>
<keyword id="KW-0378">Hydrolase</keyword>
<keyword id="KW-0460">Magnesium</keyword>
<keyword id="KW-0479">Metal-binding</keyword>
<keyword id="KW-0507">mRNA processing</keyword>
<keyword id="KW-0540">Nuclease</keyword>
<keyword id="KW-0694">RNA-binding</keyword>
<keyword id="KW-0698">rRNA processing</keyword>
<keyword id="KW-0699">rRNA-binding</keyword>
<keyword id="KW-0819">tRNA processing</keyword>
<accession>B0VTM5</accession>
<dbReference type="EC" id="3.1.26.3" evidence="1"/>
<dbReference type="EMBL" id="CU468230">
    <property type="protein sequence ID" value="CAP00312.1"/>
    <property type="molecule type" value="Genomic_DNA"/>
</dbReference>
<dbReference type="SMR" id="B0VTM5"/>
<dbReference type="KEGG" id="abm:ABSDF0952"/>
<dbReference type="HOGENOM" id="CLU_000907_1_1_6"/>
<dbReference type="Proteomes" id="UP000001741">
    <property type="component" value="Chromosome"/>
</dbReference>
<dbReference type="GO" id="GO:0005737">
    <property type="term" value="C:cytoplasm"/>
    <property type="evidence" value="ECO:0007669"/>
    <property type="project" value="UniProtKB-SubCell"/>
</dbReference>
<dbReference type="GO" id="GO:0046872">
    <property type="term" value="F:metal ion binding"/>
    <property type="evidence" value="ECO:0007669"/>
    <property type="project" value="UniProtKB-KW"/>
</dbReference>
<dbReference type="GO" id="GO:0004525">
    <property type="term" value="F:ribonuclease III activity"/>
    <property type="evidence" value="ECO:0007669"/>
    <property type="project" value="UniProtKB-UniRule"/>
</dbReference>
<dbReference type="GO" id="GO:0019843">
    <property type="term" value="F:rRNA binding"/>
    <property type="evidence" value="ECO:0007669"/>
    <property type="project" value="UniProtKB-KW"/>
</dbReference>
<dbReference type="GO" id="GO:0006397">
    <property type="term" value="P:mRNA processing"/>
    <property type="evidence" value="ECO:0007669"/>
    <property type="project" value="UniProtKB-UniRule"/>
</dbReference>
<dbReference type="GO" id="GO:0006364">
    <property type="term" value="P:rRNA processing"/>
    <property type="evidence" value="ECO:0007669"/>
    <property type="project" value="UniProtKB-UniRule"/>
</dbReference>
<dbReference type="GO" id="GO:0008033">
    <property type="term" value="P:tRNA processing"/>
    <property type="evidence" value="ECO:0007669"/>
    <property type="project" value="UniProtKB-KW"/>
</dbReference>
<dbReference type="CDD" id="cd10845">
    <property type="entry name" value="DSRM_RNAse_III_family"/>
    <property type="match status" value="1"/>
</dbReference>
<dbReference type="CDD" id="cd00593">
    <property type="entry name" value="RIBOc"/>
    <property type="match status" value="1"/>
</dbReference>
<dbReference type="FunFam" id="1.10.1520.10:FF:000001">
    <property type="entry name" value="Ribonuclease 3"/>
    <property type="match status" value="1"/>
</dbReference>
<dbReference type="FunFam" id="3.30.160.20:FF:000003">
    <property type="entry name" value="Ribonuclease 3"/>
    <property type="match status" value="1"/>
</dbReference>
<dbReference type="Gene3D" id="3.30.160.20">
    <property type="match status" value="1"/>
</dbReference>
<dbReference type="Gene3D" id="1.10.1520.10">
    <property type="entry name" value="Ribonuclease III domain"/>
    <property type="match status" value="1"/>
</dbReference>
<dbReference type="HAMAP" id="MF_00104">
    <property type="entry name" value="RNase_III"/>
    <property type="match status" value="1"/>
</dbReference>
<dbReference type="InterPro" id="IPR014720">
    <property type="entry name" value="dsRBD_dom"/>
</dbReference>
<dbReference type="InterPro" id="IPR011907">
    <property type="entry name" value="RNase_III"/>
</dbReference>
<dbReference type="InterPro" id="IPR000999">
    <property type="entry name" value="RNase_III_dom"/>
</dbReference>
<dbReference type="InterPro" id="IPR036389">
    <property type="entry name" value="RNase_III_sf"/>
</dbReference>
<dbReference type="NCBIfam" id="TIGR02191">
    <property type="entry name" value="RNaseIII"/>
    <property type="match status" value="1"/>
</dbReference>
<dbReference type="PANTHER" id="PTHR14950">
    <property type="entry name" value="DICER-RELATED"/>
    <property type="match status" value="1"/>
</dbReference>
<dbReference type="PANTHER" id="PTHR14950:SF37">
    <property type="entry name" value="ENDORIBONUCLEASE DICER"/>
    <property type="match status" value="1"/>
</dbReference>
<dbReference type="Pfam" id="PF00035">
    <property type="entry name" value="dsrm"/>
    <property type="match status" value="1"/>
</dbReference>
<dbReference type="Pfam" id="PF14622">
    <property type="entry name" value="Ribonucleas_3_3"/>
    <property type="match status" value="1"/>
</dbReference>
<dbReference type="SMART" id="SM00358">
    <property type="entry name" value="DSRM"/>
    <property type="match status" value="1"/>
</dbReference>
<dbReference type="SMART" id="SM00535">
    <property type="entry name" value="RIBOc"/>
    <property type="match status" value="1"/>
</dbReference>
<dbReference type="SUPFAM" id="SSF54768">
    <property type="entry name" value="dsRNA-binding domain-like"/>
    <property type="match status" value="1"/>
</dbReference>
<dbReference type="SUPFAM" id="SSF69065">
    <property type="entry name" value="RNase III domain-like"/>
    <property type="match status" value="1"/>
</dbReference>
<dbReference type="PROSITE" id="PS50137">
    <property type="entry name" value="DS_RBD"/>
    <property type="match status" value="1"/>
</dbReference>
<dbReference type="PROSITE" id="PS00517">
    <property type="entry name" value="RNASE_3_1"/>
    <property type="match status" value="1"/>
</dbReference>
<dbReference type="PROSITE" id="PS50142">
    <property type="entry name" value="RNASE_3_2"/>
    <property type="match status" value="1"/>
</dbReference>
<organism>
    <name type="scientific">Acinetobacter baumannii (strain SDF)</name>
    <dbReference type="NCBI Taxonomy" id="509170"/>
    <lineage>
        <taxon>Bacteria</taxon>
        <taxon>Pseudomonadati</taxon>
        <taxon>Pseudomonadota</taxon>
        <taxon>Gammaproteobacteria</taxon>
        <taxon>Moraxellales</taxon>
        <taxon>Moraxellaceae</taxon>
        <taxon>Acinetobacter</taxon>
        <taxon>Acinetobacter calcoaceticus/baumannii complex</taxon>
    </lineage>
</organism>